<organism>
    <name type="scientific">Ralstonia pickettii (strain 12J)</name>
    <dbReference type="NCBI Taxonomy" id="402626"/>
    <lineage>
        <taxon>Bacteria</taxon>
        <taxon>Pseudomonadati</taxon>
        <taxon>Pseudomonadota</taxon>
        <taxon>Betaproteobacteria</taxon>
        <taxon>Burkholderiales</taxon>
        <taxon>Burkholderiaceae</taxon>
        <taxon>Ralstonia</taxon>
    </lineage>
</organism>
<accession>B2UCX0</accession>
<comment type="function">
    <text evidence="1">Catalyzes the hydrolysis of UDP-3-O-myristoyl-N-acetylglucosamine to form UDP-3-O-myristoylglucosamine and acetate, the committed step in lipid A biosynthesis.</text>
</comment>
<comment type="catalytic activity">
    <reaction evidence="1">
        <text>a UDP-3-O-[(3R)-3-hydroxyacyl]-N-acetyl-alpha-D-glucosamine + H2O = a UDP-3-O-[(3R)-3-hydroxyacyl]-alpha-D-glucosamine + acetate</text>
        <dbReference type="Rhea" id="RHEA:67816"/>
        <dbReference type="ChEBI" id="CHEBI:15377"/>
        <dbReference type="ChEBI" id="CHEBI:30089"/>
        <dbReference type="ChEBI" id="CHEBI:137740"/>
        <dbReference type="ChEBI" id="CHEBI:173225"/>
        <dbReference type="EC" id="3.5.1.108"/>
    </reaction>
</comment>
<comment type="cofactor">
    <cofactor evidence="1">
        <name>Zn(2+)</name>
        <dbReference type="ChEBI" id="CHEBI:29105"/>
    </cofactor>
</comment>
<comment type="pathway">
    <text evidence="1">Glycolipid biosynthesis; lipid IV(A) biosynthesis; lipid IV(A) from (3R)-3-hydroxytetradecanoyl-[acyl-carrier-protein] and UDP-N-acetyl-alpha-D-glucosamine: step 2/6.</text>
</comment>
<comment type="similarity">
    <text evidence="1">Belongs to the LpxC family.</text>
</comment>
<keyword id="KW-0378">Hydrolase</keyword>
<keyword id="KW-0441">Lipid A biosynthesis</keyword>
<keyword id="KW-0444">Lipid biosynthesis</keyword>
<keyword id="KW-0443">Lipid metabolism</keyword>
<keyword id="KW-0479">Metal-binding</keyword>
<keyword id="KW-0862">Zinc</keyword>
<evidence type="ECO:0000255" key="1">
    <source>
        <dbReference type="HAMAP-Rule" id="MF_00388"/>
    </source>
</evidence>
<sequence>MLKQRTIKSLVKTVGIGLHSGRKVTLTLRPAAAGTGIVFTRVDLDPAVEIPATASAIGDTRLASVLQKDGARVSTVEHLMSACAGLGIDNLYVDVDAEEIPIMDGSAASFVFLLQSAGIEEQGAAKRFIRVTKPVEIREGDKLARLDPYFGFKLSFTIEFRHPAVDKTGQTFEIDFADTSYTREIARARTFGFAHEVEMLREVGLARGGSLDNAIVLDEHRMLNNDELRYGDEFVRHKILDAIGDLYVVGHPLIAAYTAHKSGHGLNNALLRALLADETAYEIVTFDKIEEAPRAFLPQLQPAFS</sequence>
<feature type="chain" id="PRO_1000122810" description="UDP-3-O-acyl-N-acetylglucosamine deacetylase">
    <location>
        <begin position="1"/>
        <end position="305"/>
    </location>
</feature>
<feature type="active site" description="Proton donor" evidence="1">
    <location>
        <position position="264"/>
    </location>
</feature>
<feature type="binding site" evidence="1">
    <location>
        <position position="78"/>
    </location>
    <ligand>
        <name>Zn(2+)</name>
        <dbReference type="ChEBI" id="CHEBI:29105"/>
    </ligand>
</feature>
<feature type="binding site" evidence="1">
    <location>
        <position position="237"/>
    </location>
    <ligand>
        <name>Zn(2+)</name>
        <dbReference type="ChEBI" id="CHEBI:29105"/>
    </ligand>
</feature>
<feature type="binding site" evidence="1">
    <location>
        <position position="241"/>
    </location>
    <ligand>
        <name>Zn(2+)</name>
        <dbReference type="ChEBI" id="CHEBI:29105"/>
    </ligand>
</feature>
<gene>
    <name evidence="1" type="primary">lpxC</name>
    <name type="ordered locus">Rpic_3082</name>
</gene>
<dbReference type="EC" id="3.5.1.108" evidence="1"/>
<dbReference type="EMBL" id="CP001068">
    <property type="protein sequence ID" value="ACD28205.1"/>
    <property type="molecule type" value="Genomic_DNA"/>
</dbReference>
<dbReference type="SMR" id="B2UCX0"/>
<dbReference type="STRING" id="402626.Rpic_3082"/>
<dbReference type="KEGG" id="rpi:Rpic_3082"/>
<dbReference type="eggNOG" id="COG0774">
    <property type="taxonomic scope" value="Bacteria"/>
</dbReference>
<dbReference type="HOGENOM" id="CLU_046528_1_0_4"/>
<dbReference type="UniPathway" id="UPA00359">
    <property type="reaction ID" value="UER00478"/>
</dbReference>
<dbReference type="GO" id="GO:0016020">
    <property type="term" value="C:membrane"/>
    <property type="evidence" value="ECO:0007669"/>
    <property type="project" value="GOC"/>
</dbReference>
<dbReference type="GO" id="GO:0046872">
    <property type="term" value="F:metal ion binding"/>
    <property type="evidence" value="ECO:0007669"/>
    <property type="project" value="UniProtKB-KW"/>
</dbReference>
<dbReference type="GO" id="GO:0103117">
    <property type="term" value="F:UDP-3-O-acyl-N-acetylglucosamine deacetylase activity"/>
    <property type="evidence" value="ECO:0007669"/>
    <property type="project" value="UniProtKB-UniRule"/>
</dbReference>
<dbReference type="GO" id="GO:0009245">
    <property type="term" value="P:lipid A biosynthetic process"/>
    <property type="evidence" value="ECO:0007669"/>
    <property type="project" value="UniProtKB-UniRule"/>
</dbReference>
<dbReference type="Gene3D" id="3.30.230.20">
    <property type="entry name" value="lpxc deacetylase, domain 1"/>
    <property type="match status" value="1"/>
</dbReference>
<dbReference type="Gene3D" id="3.30.1700.10">
    <property type="entry name" value="lpxc deacetylase, domain 2"/>
    <property type="match status" value="1"/>
</dbReference>
<dbReference type="HAMAP" id="MF_00388">
    <property type="entry name" value="LpxC"/>
    <property type="match status" value="1"/>
</dbReference>
<dbReference type="InterPro" id="IPR020568">
    <property type="entry name" value="Ribosomal_Su5_D2-typ_SF"/>
</dbReference>
<dbReference type="InterPro" id="IPR004463">
    <property type="entry name" value="UDP-acyl_GlcNac_deAcase"/>
</dbReference>
<dbReference type="InterPro" id="IPR011334">
    <property type="entry name" value="UDP-acyl_GlcNac_deAcase_C"/>
</dbReference>
<dbReference type="InterPro" id="IPR015870">
    <property type="entry name" value="UDP-acyl_N-AcGlcN_deAcase_N"/>
</dbReference>
<dbReference type="NCBIfam" id="TIGR00325">
    <property type="entry name" value="lpxC"/>
    <property type="match status" value="1"/>
</dbReference>
<dbReference type="PANTHER" id="PTHR33694">
    <property type="entry name" value="UDP-3-O-ACYL-N-ACETYLGLUCOSAMINE DEACETYLASE 1, MITOCHONDRIAL-RELATED"/>
    <property type="match status" value="1"/>
</dbReference>
<dbReference type="PANTHER" id="PTHR33694:SF1">
    <property type="entry name" value="UDP-3-O-ACYL-N-ACETYLGLUCOSAMINE DEACETYLASE 1, MITOCHONDRIAL-RELATED"/>
    <property type="match status" value="1"/>
</dbReference>
<dbReference type="Pfam" id="PF03331">
    <property type="entry name" value="LpxC"/>
    <property type="match status" value="1"/>
</dbReference>
<dbReference type="SUPFAM" id="SSF54211">
    <property type="entry name" value="Ribosomal protein S5 domain 2-like"/>
    <property type="match status" value="2"/>
</dbReference>
<name>LPXC_RALPJ</name>
<reference key="1">
    <citation type="submission" date="2008-05" db="EMBL/GenBank/DDBJ databases">
        <title>Complete sequence of chromosome 1 of Ralstonia pickettii 12J.</title>
        <authorList>
            <person name="Lucas S."/>
            <person name="Copeland A."/>
            <person name="Lapidus A."/>
            <person name="Glavina del Rio T."/>
            <person name="Dalin E."/>
            <person name="Tice H."/>
            <person name="Bruce D."/>
            <person name="Goodwin L."/>
            <person name="Pitluck S."/>
            <person name="Meincke L."/>
            <person name="Brettin T."/>
            <person name="Detter J.C."/>
            <person name="Han C."/>
            <person name="Kuske C.R."/>
            <person name="Schmutz J."/>
            <person name="Larimer F."/>
            <person name="Land M."/>
            <person name="Hauser L."/>
            <person name="Kyrpides N."/>
            <person name="Mikhailova N."/>
            <person name="Marsh T."/>
            <person name="Richardson P."/>
        </authorList>
    </citation>
    <scope>NUCLEOTIDE SEQUENCE [LARGE SCALE GENOMIC DNA]</scope>
    <source>
        <strain>12J</strain>
    </source>
</reference>
<proteinExistence type="inferred from homology"/>
<protein>
    <recommendedName>
        <fullName evidence="1">UDP-3-O-acyl-N-acetylglucosamine deacetylase</fullName>
        <shortName evidence="1">UDP-3-O-acyl-GlcNAc deacetylase</shortName>
        <ecNumber evidence="1">3.5.1.108</ecNumber>
    </recommendedName>
    <alternativeName>
        <fullName evidence="1">UDP-3-O-[R-3-hydroxymyristoyl]-N-acetylglucosamine deacetylase</fullName>
    </alternativeName>
</protein>